<feature type="chain" id="PRO_1000090434" description="UDP-N-acetylglucosamine--N-acetylmuramyl-(pentapeptide) pyrophosphoryl-undecaprenol N-acetylglucosamine transferase">
    <location>
        <begin position="1"/>
        <end position="370"/>
    </location>
</feature>
<feature type="binding site" evidence="1">
    <location>
        <begin position="10"/>
        <end position="12"/>
    </location>
    <ligand>
        <name>UDP-N-acetyl-alpha-D-glucosamine</name>
        <dbReference type="ChEBI" id="CHEBI:57705"/>
    </ligand>
</feature>
<feature type="binding site" evidence="1">
    <location>
        <position position="124"/>
    </location>
    <ligand>
        <name>UDP-N-acetyl-alpha-D-glucosamine</name>
        <dbReference type="ChEBI" id="CHEBI:57705"/>
    </ligand>
</feature>
<feature type="binding site" evidence="1">
    <location>
        <position position="166"/>
    </location>
    <ligand>
        <name>UDP-N-acetyl-alpha-D-glucosamine</name>
        <dbReference type="ChEBI" id="CHEBI:57705"/>
    </ligand>
</feature>
<feature type="binding site" evidence="1">
    <location>
        <position position="198"/>
    </location>
    <ligand>
        <name>UDP-N-acetyl-alpha-D-glucosamine</name>
        <dbReference type="ChEBI" id="CHEBI:57705"/>
    </ligand>
</feature>
<feature type="binding site" evidence="1">
    <location>
        <position position="252"/>
    </location>
    <ligand>
        <name>UDP-N-acetyl-alpha-D-glucosamine</name>
        <dbReference type="ChEBI" id="CHEBI:57705"/>
    </ligand>
</feature>
<feature type="binding site" evidence="1">
    <location>
        <position position="297"/>
    </location>
    <ligand>
        <name>UDP-N-acetyl-alpha-D-glucosamine</name>
        <dbReference type="ChEBI" id="CHEBI:57705"/>
    </ligand>
</feature>
<protein>
    <recommendedName>
        <fullName evidence="1">UDP-N-acetylglucosamine--N-acetylmuramyl-(pentapeptide) pyrophosphoryl-undecaprenol N-acetylglucosamine transferase</fullName>
        <ecNumber evidence="1">2.4.1.227</ecNumber>
    </recommendedName>
    <alternativeName>
        <fullName evidence="1">Undecaprenyl-PP-MurNAc-pentapeptide-UDPGlcNAc GlcNAc transferase</fullName>
    </alternativeName>
</protein>
<organism>
    <name type="scientific">Finegoldia magna (strain ATCC 29328 / DSM 20472 / WAL 2508)</name>
    <name type="common">Peptostreptococcus magnus</name>
    <dbReference type="NCBI Taxonomy" id="334413"/>
    <lineage>
        <taxon>Bacteria</taxon>
        <taxon>Bacillati</taxon>
        <taxon>Bacillota</taxon>
        <taxon>Tissierellia</taxon>
        <taxon>Tissierellales</taxon>
        <taxon>Peptoniphilaceae</taxon>
        <taxon>Finegoldia</taxon>
    </lineage>
</organism>
<sequence length="370" mass="41520">MNIIVSGGGTGGHIYPAISLIEELKKRDKDNKILYVGTEKGLESSIVPKLGIDFKTIHVRGIPRKINANSFKALKELFQGLREANKILKEFKPDLVIGTGGYVSGPILYKATKTKAKVAFHEQNSFPGITNRILSRYVDKYFVTFKESIKYFKNQDKAVVTGNPIRNRFTDIEKNKKSALEQYDISENKKVVFIFGGSNGSEILNKATLNMIEKISNQDKFEIVLATGKLNYDEFIQQSGKEIKNLHVYPYIDDIDKAYAVSDLIVTSSGAITLAELSFLGKASILVPKAYTTENHQEHNARAFEKNGASKVILEKDLNSDTLFDQINEILSDDNLLNELSENSKKMSYPTACKDIVDELYRLVEQDEKA</sequence>
<dbReference type="EC" id="2.4.1.227" evidence="1"/>
<dbReference type="EMBL" id="AP008971">
    <property type="protein sequence ID" value="BAG08035.1"/>
    <property type="molecule type" value="Genomic_DNA"/>
</dbReference>
<dbReference type="RefSeq" id="WP_012290522.1">
    <property type="nucleotide sequence ID" value="NC_010376.1"/>
</dbReference>
<dbReference type="SMR" id="B0S0Z5"/>
<dbReference type="STRING" id="334413.FMG_0617"/>
<dbReference type="CAZy" id="GT28">
    <property type="family name" value="Glycosyltransferase Family 28"/>
</dbReference>
<dbReference type="KEGG" id="fma:FMG_0617"/>
<dbReference type="eggNOG" id="COG0707">
    <property type="taxonomic scope" value="Bacteria"/>
</dbReference>
<dbReference type="HOGENOM" id="CLU_037404_0_1_9"/>
<dbReference type="UniPathway" id="UPA00219"/>
<dbReference type="Proteomes" id="UP000001319">
    <property type="component" value="Chromosome"/>
</dbReference>
<dbReference type="GO" id="GO:0005886">
    <property type="term" value="C:plasma membrane"/>
    <property type="evidence" value="ECO:0007669"/>
    <property type="project" value="UniProtKB-SubCell"/>
</dbReference>
<dbReference type="GO" id="GO:0051991">
    <property type="term" value="F:UDP-N-acetyl-D-glucosamine:N-acetylmuramoyl-L-alanyl-D-glutamyl-meso-2,6-diaminopimelyl-D-alanyl-D-alanine-diphosphoundecaprenol 4-beta-N-acetylglucosaminlytransferase activity"/>
    <property type="evidence" value="ECO:0007669"/>
    <property type="project" value="RHEA"/>
</dbReference>
<dbReference type="GO" id="GO:0050511">
    <property type="term" value="F:undecaprenyldiphospho-muramoylpentapeptide beta-N-acetylglucosaminyltransferase activity"/>
    <property type="evidence" value="ECO:0007669"/>
    <property type="project" value="UniProtKB-UniRule"/>
</dbReference>
<dbReference type="GO" id="GO:0005975">
    <property type="term" value="P:carbohydrate metabolic process"/>
    <property type="evidence" value="ECO:0007669"/>
    <property type="project" value="InterPro"/>
</dbReference>
<dbReference type="GO" id="GO:0051301">
    <property type="term" value="P:cell division"/>
    <property type="evidence" value="ECO:0007669"/>
    <property type="project" value="UniProtKB-KW"/>
</dbReference>
<dbReference type="GO" id="GO:0071555">
    <property type="term" value="P:cell wall organization"/>
    <property type="evidence" value="ECO:0007669"/>
    <property type="project" value="UniProtKB-KW"/>
</dbReference>
<dbReference type="GO" id="GO:0030259">
    <property type="term" value="P:lipid glycosylation"/>
    <property type="evidence" value="ECO:0007669"/>
    <property type="project" value="UniProtKB-UniRule"/>
</dbReference>
<dbReference type="GO" id="GO:0009252">
    <property type="term" value="P:peptidoglycan biosynthetic process"/>
    <property type="evidence" value="ECO:0007669"/>
    <property type="project" value="UniProtKB-UniRule"/>
</dbReference>
<dbReference type="GO" id="GO:0008360">
    <property type="term" value="P:regulation of cell shape"/>
    <property type="evidence" value="ECO:0007669"/>
    <property type="project" value="UniProtKB-KW"/>
</dbReference>
<dbReference type="CDD" id="cd03785">
    <property type="entry name" value="GT28_MurG"/>
    <property type="match status" value="1"/>
</dbReference>
<dbReference type="Gene3D" id="3.40.50.2000">
    <property type="entry name" value="Glycogen Phosphorylase B"/>
    <property type="match status" value="2"/>
</dbReference>
<dbReference type="HAMAP" id="MF_00033">
    <property type="entry name" value="MurG"/>
    <property type="match status" value="1"/>
</dbReference>
<dbReference type="InterPro" id="IPR006009">
    <property type="entry name" value="GlcNAc_MurG"/>
</dbReference>
<dbReference type="InterPro" id="IPR007235">
    <property type="entry name" value="Glyco_trans_28_C"/>
</dbReference>
<dbReference type="InterPro" id="IPR004276">
    <property type="entry name" value="GlycoTrans_28_N"/>
</dbReference>
<dbReference type="NCBIfam" id="TIGR01133">
    <property type="entry name" value="murG"/>
    <property type="match status" value="1"/>
</dbReference>
<dbReference type="PANTHER" id="PTHR21015:SF22">
    <property type="entry name" value="GLYCOSYLTRANSFERASE"/>
    <property type="match status" value="1"/>
</dbReference>
<dbReference type="PANTHER" id="PTHR21015">
    <property type="entry name" value="UDP-N-ACETYLGLUCOSAMINE--N-ACETYLMURAMYL-(PENTAPEPTIDE) PYROPHOSPHORYL-UNDECAPRENOL N-ACETYLGLUCOSAMINE TRANSFERASE 1"/>
    <property type="match status" value="1"/>
</dbReference>
<dbReference type="Pfam" id="PF04101">
    <property type="entry name" value="Glyco_tran_28_C"/>
    <property type="match status" value="1"/>
</dbReference>
<dbReference type="Pfam" id="PF03033">
    <property type="entry name" value="Glyco_transf_28"/>
    <property type="match status" value="1"/>
</dbReference>
<dbReference type="SUPFAM" id="SSF53756">
    <property type="entry name" value="UDP-Glycosyltransferase/glycogen phosphorylase"/>
    <property type="match status" value="1"/>
</dbReference>
<gene>
    <name evidence="1" type="primary">murG</name>
    <name type="ordered locus">FMG_0617</name>
</gene>
<keyword id="KW-0131">Cell cycle</keyword>
<keyword id="KW-0132">Cell division</keyword>
<keyword id="KW-1003">Cell membrane</keyword>
<keyword id="KW-0133">Cell shape</keyword>
<keyword id="KW-0961">Cell wall biogenesis/degradation</keyword>
<keyword id="KW-0328">Glycosyltransferase</keyword>
<keyword id="KW-0472">Membrane</keyword>
<keyword id="KW-0573">Peptidoglycan synthesis</keyword>
<keyword id="KW-1185">Reference proteome</keyword>
<keyword id="KW-0808">Transferase</keyword>
<evidence type="ECO:0000255" key="1">
    <source>
        <dbReference type="HAMAP-Rule" id="MF_00033"/>
    </source>
</evidence>
<accession>B0S0Z5</accession>
<name>MURG_FINM2</name>
<proteinExistence type="inferred from homology"/>
<comment type="function">
    <text evidence="1">Cell wall formation. Catalyzes the transfer of a GlcNAc subunit on undecaprenyl-pyrophosphoryl-MurNAc-pentapeptide (lipid intermediate I) to form undecaprenyl-pyrophosphoryl-MurNAc-(pentapeptide)GlcNAc (lipid intermediate II).</text>
</comment>
<comment type="catalytic activity">
    <reaction evidence="1">
        <text>di-trans,octa-cis-undecaprenyl diphospho-N-acetyl-alpha-D-muramoyl-L-alanyl-D-glutamyl-meso-2,6-diaminopimeloyl-D-alanyl-D-alanine + UDP-N-acetyl-alpha-D-glucosamine = di-trans,octa-cis-undecaprenyl diphospho-[N-acetyl-alpha-D-glucosaminyl-(1-&gt;4)]-N-acetyl-alpha-D-muramoyl-L-alanyl-D-glutamyl-meso-2,6-diaminopimeloyl-D-alanyl-D-alanine + UDP + H(+)</text>
        <dbReference type="Rhea" id="RHEA:31227"/>
        <dbReference type="ChEBI" id="CHEBI:15378"/>
        <dbReference type="ChEBI" id="CHEBI:57705"/>
        <dbReference type="ChEBI" id="CHEBI:58223"/>
        <dbReference type="ChEBI" id="CHEBI:61387"/>
        <dbReference type="ChEBI" id="CHEBI:61388"/>
        <dbReference type="EC" id="2.4.1.227"/>
    </reaction>
</comment>
<comment type="pathway">
    <text evidence="1">Cell wall biogenesis; peptidoglycan biosynthesis.</text>
</comment>
<comment type="subcellular location">
    <subcellularLocation>
        <location evidence="1">Cell membrane</location>
        <topology evidence="1">Peripheral membrane protein</topology>
        <orientation evidence="1">Cytoplasmic side</orientation>
    </subcellularLocation>
</comment>
<comment type="similarity">
    <text evidence="1">Belongs to the glycosyltransferase 28 family. MurG subfamily.</text>
</comment>
<reference key="1">
    <citation type="journal article" date="2008" name="DNA Res.">
        <title>Complete genome sequence of Finegoldia magna, an anaerobic opportunistic pathogen.</title>
        <authorList>
            <person name="Goto T."/>
            <person name="Yamashita A."/>
            <person name="Hirakawa H."/>
            <person name="Matsutani M."/>
            <person name="Todo K."/>
            <person name="Ohshima K."/>
            <person name="Toh H."/>
            <person name="Miyamoto K."/>
            <person name="Kuhara S."/>
            <person name="Hattori M."/>
            <person name="Shimizu T."/>
            <person name="Akimoto S."/>
        </authorList>
    </citation>
    <scope>NUCLEOTIDE SEQUENCE [LARGE SCALE GENOMIC DNA]</scope>
    <source>
        <strain>ATCC 29328 / DSM 20472 / WAL 2508</strain>
    </source>
</reference>